<evidence type="ECO:0000255" key="1"/>
<evidence type="ECO:0000256" key="2">
    <source>
        <dbReference type="SAM" id="MobiDB-lite"/>
    </source>
</evidence>
<evidence type="ECO:0000305" key="3"/>
<proteinExistence type="evidence at transcript level"/>
<comment type="developmental stage">
    <text>Expressed specifically in the prespore cells.</text>
</comment>
<comment type="induction">
    <text>By cAMP.</text>
</comment>
<organism>
    <name type="scientific">Dictyostelium discoideum</name>
    <name type="common">Social amoeba</name>
    <dbReference type="NCBI Taxonomy" id="44689"/>
    <lineage>
        <taxon>Eukaryota</taxon>
        <taxon>Amoebozoa</taxon>
        <taxon>Evosea</taxon>
        <taxon>Eumycetozoa</taxon>
        <taxon>Dictyostelia</taxon>
        <taxon>Dictyosteliales</taxon>
        <taxon>Dictyosteliaceae</taxon>
        <taxon>Dictyostelium</taxon>
    </lineage>
</organism>
<feature type="signal peptide" evidence="1">
    <location>
        <begin position="1"/>
        <end position="24"/>
    </location>
</feature>
<feature type="chain" id="PRO_0000021060" description="cAMP-inducible prespore protein D7">
    <location>
        <begin position="25"/>
        <end position="850"/>
    </location>
</feature>
<feature type="region of interest" description="Disordered" evidence="2">
    <location>
        <begin position="119"/>
        <end position="167"/>
    </location>
</feature>
<feature type="region of interest" description="Disordered" evidence="2">
    <location>
        <begin position="787"/>
        <end position="850"/>
    </location>
</feature>
<feature type="compositionally biased region" description="Low complexity" evidence="2">
    <location>
        <begin position="119"/>
        <end position="130"/>
    </location>
</feature>
<feature type="compositionally biased region" description="Polar residues" evidence="2">
    <location>
        <begin position="131"/>
        <end position="143"/>
    </location>
</feature>
<feature type="compositionally biased region" description="Low complexity" evidence="2">
    <location>
        <begin position="144"/>
        <end position="154"/>
    </location>
</feature>
<feature type="compositionally biased region" description="Basic and acidic residues" evidence="2">
    <location>
        <begin position="787"/>
        <end position="798"/>
    </location>
</feature>
<feature type="compositionally biased region" description="Polar residues" evidence="2">
    <location>
        <begin position="801"/>
        <end position="820"/>
    </location>
</feature>
<feature type="compositionally biased region" description="Low complexity" evidence="2">
    <location>
        <begin position="837"/>
        <end position="850"/>
    </location>
</feature>
<feature type="sequence conflict" description="In Ref. 1; AAA73514." evidence="3" ref="1">
    <original>S</original>
    <variation>A</variation>
    <location>
        <position position="247"/>
    </location>
</feature>
<reference key="1">
    <citation type="journal article" date="1994" name="Differentiation">
        <title>Analysis of a novel cyclic Amp inducible prespore gene in Dictyostelium discoideum: evidence for different patterns of cAMP regulation.</title>
        <authorList>
            <person name="Agarwal A."/>
            <person name="Sloger M.S."/>
            <person name="Oyama M."/>
            <person name="Blumberg D.D."/>
        </authorList>
    </citation>
    <scope>NUCLEOTIDE SEQUENCE [GENOMIC DNA]</scope>
    <source>
        <strain>AX3</strain>
    </source>
</reference>
<reference key="2">
    <citation type="journal article" date="2005" name="Nature">
        <title>The genome of the social amoeba Dictyostelium discoideum.</title>
        <authorList>
            <person name="Eichinger L."/>
            <person name="Pachebat J.A."/>
            <person name="Gloeckner G."/>
            <person name="Rajandream M.A."/>
            <person name="Sucgang R."/>
            <person name="Berriman M."/>
            <person name="Song J."/>
            <person name="Olsen R."/>
            <person name="Szafranski K."/>
            <person name="Xu Q."/>
            <person name="Tunggal B."/>
            <person name="Kummerfeld S."/>
            <person name="Madera M."/>
            <person name="Konfortov B.A."/>
            <person name="Rivero F."/>
            <person name="Bankier A.T."/>
            <person name="Lehmann R."/>
            <person name="Hamlin N."/>
            <person name="Davies R."/>
            <person name="Gaudet P."/>
            <person name="Fey P."/>
            <person name="Pilcher K."/>
            <person name="Chen G."/>
            <person name="Saunders D."/>
            <person name="Sodergren E.J."/>
            <person name="Davis P."/>
            <person name="Kerhornou A."/>
            <person name="Nie X."/>
            <person name="Hall N."/>
            <person name="Anjard C."/>
            <person name="Hemphill L."/>
            <person name="Bason N."/>
            <person name="Farbrother P."/>
            <person name="Desany B."/>
            <person name="Just E."/>
            <person name="Morio T."/>
            <person name="Rost R."/>
            <person name="Churcher C.M."/>
            <person name="Cooper J."/>
            <person name="Haydock S."/>
            <person name="van Driessche N."/>
            <person name="Cronin A."/>
            <person name="Goodhead I."/>
            <person name="Muzny D.M."/>
            <person name="Mourier T."/>
            <person name="Pain A."/>
            <person name="Lu M."/>
            <person name="Harper D."/>
            <person name="Lindsay R."/>
            <person name="Hauser H."/>
            <person name="James K.D."/>
            <person name="Quiles M."/>
            <person name="Madan Babu M."/>
            <person name="Saito T."/>
            <person name="Buchrieser C."/>
            <person name="Wardroper A."/>
            <person name="Felder M."/>
            <person name="Thangavelu M."/>
            <person name="Johnson D."/>
            <person name="Knights A."/>
            <person name="Loulseged H."/>
            <person name="Mungall K.L."/>
            <person name="Oliver K."/>
            <person name="Price C."/>
            <person name="Quail M.A."/>
            <person name="Urushihara H."/>
            <person name="Hernandez J."/>
            <person name="Rabbinowitsch E."/>
            <person name="Steffen D."/>
            <person name="Sanders M."/>
            <person name="Ma J."/>
            <person name="Kohara Y."/>
            <person name="Sharp S."/>
            <person name="Simmonds M.N."/>
            <person name="Spiegler S."/>
            <person name="Tivey A."/>
            <person name="Sugano S."/>
            <person name="White B."/>
            <person name="Walker D."/>
            <person name="Woodward J.R."/>
            <person name="Winckler T."/>
            <person name="Tanaka Y."/>
            <person name="Shaulsky G."/>
            <person name="Schleicher M."/>
            <person name="Weinstock G.M."/>
            <person name="Rosenthal A."/>
            <person name="Cox E.C."/>
            <person name="Chisholm R.L."/>
            <person name="Gibbs R.A."/>
            <person name="Loomis W.F."/>
            <person name="Platzer M."/>
            <person name="Kay R.R."/>
            <person name="Williams J.G."/>
            <person name="Dear P.H."/>
            <person name="Noegel A.A."/>
            <person name="Barrell B.G."/>
            <person name="Kuspa A."/>
        </authorList>
    </citation>
    <scope>NUCLEOTIDE SEQUENCE [LARGE SCALE GENOMIC DNA]</scope>
    <source>
        <strain>AX4</strain>
    </source>
</reference>
<sequence length="850" mass="95359">MYSKKYTSFVIVLILSCIISTCTSNQISEDVGKAINQKLNENIEKVEDVVVQFENVANQVIEELKVEHQRQELLGEVKHDSLRDSATNYIWGLLDKIQSYLPKDNNKVSKVEEAFSSGQNNNIGSSIGDSTGASTSPQFQSINGLSGASQSSGSSTGGTGDSDSKTTNEAIIFSSKVSTTDRQESIIGQVAITAKDSLGATITGLGGVSSTAKVGGQITNGRAQGQVITGGDNTGTVGRGAVTTASSVANTVGEFLGGSRTGGSSSAGTVGNVISDSYTSIGKIASGNGNSLSETIGTTGDTLAHTFAGTDSVGVTGFHIITKTFNLIAGGKFNSDQQYIDKSYGSIPSQDNEEIKKRLQSAHQQLQEQSPAIYQSMKSEDLKNLDDEVIRNTLKEMQIQRENQDIGQQNQEDKEQLIDLQNREPGLYKNQQDLKQEKRANQQELINYELNLQEDQEQYELLLDQLYDEQQQQPQKVSNKQQLQEQQINSPEDIQYQLNHLNQPFQDDYHNDQTEELKDDDYNFNDQQINNGQFENNVEEFPDLNDANDNFEQVNNNNNNINNNNNNNFKVDKSKKSAQQVEIALENERLYLQEVEDAPERLYEEIHNSNLNKAVQEAEEIERQQNGNGSPAVNSHKIVTQMGNVENNEITNEQDAIEQAQHLQRIENGEDIDEYEAAQHEVAFLDENEQDAAKLQNEMDQLELLLEENEEEQFSNKNLQQLNENENQQQQQGQQQVQATNVEQQIVEQLKVIKEFQRQDQQKKQKIQQENDAVYLSDVEKAQLELDAELAKNNKQENQDENLVQEKQQSPDQIKNQLKNIQHEQQIQEQQDKLNQEKNQQLLEQEQNQK</sequence>
<protein>
    <recommendedName>
        <fullName>cAMP-inducible prespore protein D7</fullName>
    </recommendedName>
</protein>
<dbReference type="EMBL" id="U25143">
    <property type="protein sequence ID" value="AAA73514.1"/>
    <property type="molecule type" value="Genomic_DNA"/>
</dbReference>
<dbReference type="EMBL" id="AAFI02000070">
    <property type="protein sequence ID" value="EAL65076.1"/>
    <property type="molecule type" value="Genomic_DNA"/>
</dbReference>
<dbReference type="RefSeq" id="XP_638448.1">
    <property type="nucleotide sequence ID" value="XM_633356.1"/>
</dbReference>
<dbReference type="SMR" id="P54682"/>
<dbReference type="FunCoup" id="P54682">
    <property type="interactions" value="877"/>
</dbReference>
<dbReference type="STRING" id="44689.P54682"/>
<dbReference type="PaxDb" id="44689-DDB0191433"/>
<dbReference type="EnsemblProtists" id="EAL65076">
    <property type="protein sequence ID" value="EAL65076"/>
    <property type="gene ID" value="DDB_G0284613"/>
</dbReference>
<dbReference type="GeneID" id="8624698"/>
<dbReference type="KEGG" id="ddi:DDB_G0284613"/>
<dbReference type="dictyBase" id="DDB_G0284613">
    <property type="gene designation" value="D7"/>
</dbReference>
<dbReference type="VEuPathDB" id="AmoebaDB:DDB_G0284613"/>
<dbReference type="eggNOG" id="ENOG502RC0S">
    <property type="taxonomic scope" value="Eukaryota"/>
</dbReference>
<dbReference type="HOGENOM" id="CLU_335698_0_0_1"/>
<dbReference type="InParanoid" id="P54682"/>
<dbReference type="OMA" id="RENQDIG"/>
<dbReference type="PRO" id="PR:P54682"/>
<dbReference type="Proteomes" id="UP000002195">
    <property type="component" value="Chromosome 4"/>
</dbReference>
<dbReference type="GO" id="GO:0030435">
    <property type="term" value="P:sporulation resulting in formation of a cellular spore"/>
    <property type="evidence" value="ECO:0000314"/>
    <property type="project" value="dictyBase"/>
</dbReference>
<dbReference type="PANTHER" id="PTHR18867:SF12">
    <property type="entry name" value="DNA REPAIR PROTEIN RAD50"/>
    <property type="match status" value="1"/>
</dbReference>
<dbReference type="PANTHER" id="PTHR18867">
    <property type="entry name" value="RAD50"/>
    <property type="match status" value="1"/>
</dbReference>
<gene>
    <name type="primary">D7</name>
    <name type="ORF">DDB_G0284613</name>
</gene>
<accession>P54682</accession>
<accession>Q54PC7</accession>
<keyword id="KW-1185">Reference proteome</keyword>
<keyword id="KW-0732">Signal</keyword>
<keyword id="KW-0749">Sporulation</keyword>
<name>D7_DICDI</name>